<reference key="1">
    <citation type="journal article" date="1986" name="J. Cell Biol.">
        <title>The mammalian beta-tubulin repertoire: hematopoietic expression of a novel, heterologous beta-tubulin isotype.</title>
        <authorList>
            <person name="Wang D."/>
            <person name="Villasante A."/>
            <person name="Lewis S.A."/>
            <person name="Cowan N.J."/>
        </authorList>
    </citation>
    <scope>NUCLEOTIDE SEQUENCE [MRNA]</scope>
</reference>
<reference key="2">
    <citation type="journal article" date="2005" name="Science">
        <title>The transcriptional landscape of the mammalian genome.</title>
        <authorList>
            <person name="Carninci P."/>
            <person name="Kasukawa T."/>
            <person name="Katayama S."/>
            <person name="Gough J."/>
            <person name="Frith M.C."/>
            <person name="Maeda N."/>
            <person name="Oyama R."/>
            <person name="Ravasi T."/>
            <person name="Lenhard B."/>
            <person name="Wells C."/>
            <person name="Kodzius R."/>
            <person name="Shimokawa K."/>
            <person name="Bajic V.B."/>
            <person name="Brenner S.E."/>
            <person name="Batalov S."/>
            <person name="Forrest A.R."/>
            <person name="Zavolan M."/>
            <person name="Davis M.J."/>
            <person name="Wilming L.G."/>
            <person name="Aidinis V."/>
            <person name="Allen J.E."/>
            <person name="Ambesi-Impiombato A."/>
            <person name="Apweiler R."/>
            <person name="Aturaliya R.N."/>
            <person name="Bailey T.L."/>
            <person name="Bansal M."/>
            <person name="Baxter L."/>
            <person name="Beisel K.W."/>
            <person name="Bersano T."/>
            <person name="Bono H."/>
            <person name="Chalk A.M."/>
            <person name="Chiu K.P."/>
            <person name="Choudhary V."/>
            <person name="Christoffels A."/>
            <person name="Clutterbuck D.R."/>
            <person name="Crowe M.L."/>
            <person name="Dalla E."/>
            <person name="Dalrymple B.P."/>
            <person name="de Bono B."/>
            <person name="Della Gatta G."/>
            <person name="di Bernardo D."/>
            <person name="Down T."/>
            <person name="Engstrom P."/>
            <person name="Fagiolini M."/>
            <person name="Faulkner G."/>
            <person name="Fletcher C.F."/>
            <person name="Fukushima T."/>
            <person name="Furuno M."/>
            <person name="Futaki S."/>
            <person name="Gariboldi M."/>
            <person name="Georgii-Hemming P."/>
            <person name="Gingeras T.R."/>
            <person name="Gojobori T."/>
            <person name="Green R.E."/>
            <person name="Gustincich S."/>
            <person name="Harbers M."/>
            <person name="Hayashi Y."/>
            <person name="Hensch T.K."/>
            <person name="Hirokawa N."/>
            <person name="Hill D."/>
            <person name="Huminiecki L."/>
            <person name="Iacono M."/>
            <person name="Ikeo K."/>
            <person name="Iwama A."/>
            <person name="Ishikawa T."/>
            <person name="Jakt M."/>
            <person name="Kanapin A."/>
            <person name="Katoh M."/>
            <person name="Kawasawa Y."/>
            <person name="Kelso J."/>
            <person name="Kitamura H."/>
            <person name="Kitano H."/>
            <person name="Kollias G."/>
            <person name="Krishnan S.P."/>
            <person name="Kruger A."/>
            <person name="Kummerfeld S.K."/>
            <person name="Kurochkin I.V."/>
            <person name="Lareau L.F."/>
            <person name="Lazarevic D."/>
            <person name="Lipovich L."/>
            <person name="Liu J."/>
            <person name="Liuni S."/>
            <person name="McWilliam S."/>
            <person name="Madan Babu M."/>
            <person name="Madera M."/>
            <person name="Marchionni L."/>
            <person name="Matsuda H."/>
            <person name="Matsuzawa S."/>
            <person name="Miki H."/>
            <person name="Mignone F."/>
            <person name="Miyake S."/>
            <person name="Morris K."/>
            <person name="Mottagui-Tabar S."/>
            <person name="Mulder N."/>
            <person name="Nakano N."/>
            <person name="Nakauchi H."/>
            <person name="Ng P."/>
            <person name="Nilsson R."/>
            <person name="Nishiguchi S."/>
            <person name="Nishikawa S."/>
            <person name="Nori F."/>
            <person name="Ohara O."/>
            <person name="Okazaki Y."/>
            <person name="Orlando V."/>
            <person name="Pang K.C."/>
            <person name="Pavan W.J."/>
            <person name="Pavesi G."/>
            <person name="Pesole G."/>
            <person name="Petrovsky N."/>
            <person name="Piazza S."/>
            <person name="Reed J."/>
            <person name="Reid J.F."/>
            <person name="Ring B.Z."/>
            <person name="Ringwald M."/>
            <person name="Rost B."/>
            <person name="Ruan Y."/>
            <person name="Salzberg S.L."/>
            <person name="Sandelin A."/>
            <person name="Schneider C."/>
            <person name="Schoenbach C."/>
            <person name="Sekiguchi K."/>
            <person name="Semple C.A."/>
            <person name="Seno S."/>
            <person name="Sessa L."/>
            <person name="Sheng Y."/>
            <person name="Shibata Y."/>
            <person name="Shimada H."/>
            <person name="Shimada K."/>
            <person name="Silva D."/>
            <person name="Sinclair B."/>
            <person name="Sperling S."/>
            <person name="Stupka E."/>
            <person name="Sugiura K."/>
            <person name="Sultana R."/>
            <person name="Takenaka Y."/>
            <person name="Taki K."/>
            <person name="Tammoja K."/>
            <person name="Tan S.L."/>
            <person name="Tang S."/>
            <person name="Taylor M.S."/>
            <person name="Tegner J."/>
            <person name="Teichmann S.A."/>
            <person name="Ueda H.R."/>
            <person name="van Nimwegen E."/>
            <person name="Verardo R."/>
            <person name="Wei C.L."/>
            <person name="Yagi K."/>
            <person name="Yamanishi H."/>
            <person name="Zabarovsky E."/>
            <person name="Zhu S."/>
            <person name="Zimmer A."/>
            <person name="Hide W."/>
            <person name="Bult C."/>
            <person name="Grimmond S.M."/>
            <person name="Teasdale R.D."/>
            <person name="Liu E.T."/>
            <person name="Brusic V."/>
            <person name="Quackenbush J."/>
            <person name="Wahlestedt C."/>
            <person name="Mattick J.S."/>
            <person name="Hume D.A."/>
            <person name="Kai C."/>
            <person name="Sasaki D."/>
            <person name="Tomaru Y."/>
            <person name="Fukuda S."/>
            <person name="Kanamori-Katayama M."/>
            <person name="Suzuki M."/>
            <person name="Aoki J."/>
            <person name="Arakawa T."/>
            <person name="Iida J."/>
            <person name="Imamura K."/>
            <person name="Itoh M."/>
            <person name="Kato T."/>
            <person name="Kawaji H."/>
            <person name="Kawagashira N."/>
            <person name="Kawashima T."/>
            <person name="Kojima M."/>
            <person name="Kondo S."/>
            <person name="Konno H."/>
            <person name="Nakano K."/>
            <person name="Ninomiya N."/>
            <person name="Nishio T."/>
            <person name="Okada M."/>
            <person name="Plessy C."/>
            <person name="Shibata K."/>
            <person name="Shiraki T."/>
            <person name="Suzuki S."/>
            <person name="Tagami M."/>
            <person name="Waki K."/>
            <person name="Watahiki A."/>
            <person name="Okamura-Oho Y."/>
            <person name="Suzuki H."/>
            <person name="Kawai J."/>
            <person name="Hayashizaki Y."/>
        </authorList>
    </citation>
    <scope>NUCLEOTIDE SEQUENCE [LARGE SCALE MRNA]</scope>
    <source>
        <strain>C57BL/6J</strain>
    </source>
</reference>
<reference key="3">
    <citation type="journal article" date="2009" name="PLoS Biol.">
        <title>Lineage-specific biology revealed by a finished genome assembly of the mouse.</title>
        <authorList>
            <person name="Church D.M."/>
            <person name="Goodstadt L."/>
            <person name="Hillier L.W."/>
            <person name="Zody M.C."/>
            <person name="Goldstein S."/>
            <person name="She X."/>
            <person name="Bult C.J."/>
            <person name="Agarwala R."/>
            <person name="Cherry J.L."/>
            <person name="DiCuccio M."/>
            <person name="Hlavina W."/>
            <person name="Kapustin Y."/>
            <person name="Meric P."/>
            <person name="Maglott D."/>
            <person name="Birtle Z."/>
            <person name="Marques A.C."/>
            <person name="Graves T."/>
            <person name="Zhou S."/>
            <person name="Teague B."/>
            <person name="Potamousis K."/>
            <person name="Churas C."/>
            <person name="Place M."/>
            <person name="Herschleb J."/>
            <person name="Runnheim R."/>
            <person name="Forrest D."/>
            <person name="Amos-Landgraf J."/>
            <person name="Schwartz D.C."/>
            <person name="Cheng Z."/>
            <person name="Lindblad-Toh K."/>
            <person name="Eichler E.E."/>
            <person name="Ponting C.P."/>
        </authorList>
    </citation>
    <scope>NUCLEOTIDE SEQUENCE [LARGE SCALE GENOMIC DNA]</scope>
    <source>
        <strain>C57BL/6J</strain>
    </source>
</reference>
<reference key="4">
    <citation type="journal article" date="2004" name="Genome Res.">
        <title>The status, quality, and expansion of the NIH full-length cDNA project: the Mammalian Gene Collection (MGC).</title>
        <authorList>
            <consortium name="The MGC Project Team"/>
        </authorList>
    </citation>
    <scope>NUCLEOTIDE SEQUENCE [LARGE SCALE MRNA]</scope>
    <source>
        <strain>C57BL/6J</strain>
        <strain>FVB/N</strain>
        <tissue>Brain</tissue>
        <tissue>Kidney</tissue>
        <tissue>Mammary tumor</tissue>
    </source>
</reference>
<reference key="5">
    <citation type="submission" date="2009-01" db="UniProtKB">
        <authorList>
            <person name="Lubec G."/>
            <person name="Klug S."/>
            <person name="Kang S.U."/>
            <person name="Sunyer B."/>
            <person name="Chen W.-Q."/>
        </authorList>
    </citation>
    <scope>PROTEIN SEQUENCE OF 3-19; 47-58; 63-121; 163-174; 217-276; 283-297; 310-318; 321-359; 363-379 AND 381-390</scope>
    <scope>IDENTIFICATION BY MASS SPECTROMETRY</scope>
    <source>
        <strain>C57BL/6J</strain>
        <strain>OF1</strain>
        <tissue>Brain</tissue>
        <tissue>Hippocampus</tissue>
    </source>
</reference>
<reference key="6">
    <citation type="journal article" date="2005" name="Science">
        <title>Tubulin polyglutamylase enzymes are members of the TTL domain protein family.</title>
        <authorList>
            <person name="Janke C."/>
            <person name="Rogowski K."/>
            <person name="Wloga D."/>
            <person name="Regnard C."/>
            <person name="Kajava A.V."/>
            <person name="Strub J.-M."/>
            <person name="Temurak N."/>
            <person name="van Dijk J."/>
            <person name="Boucher D."/>
            <person name="van Dorsselaer A."/>
            <person name="Suryavanshi S."/>
            <person name="Gaertig J."/>
            <person name="Edde B."/>
        </authorList>
    </citation>
    <scope>GLUTAMYLATION</scope>
</reference>
<reference key="7">
    <citation type="journal article" date="2009" name="Cell">
        <title>Evolutionary divergence of enzymatic mechanisms for posttranslational polyglycylation.</title>
        <authorList>
            <person name="Rogowski K."/>
            <person name="Juge F."/>
            <person name="van Dijk J."/>
            <person name="Wloga D."/>
            <person name="Strub J.-M."/>
            <person name="Levilliers N."/>
            <person name="Thomas D."/>
            <person name="Bre M.-H."/>
            <person name="Van Dorsselaer A."/>
            <person name="Gaertig J."/>
            <person name="Janke C."/>
        </authorList>
    </citation>
    <scope>GLYCYLATION</scope>
</reference>
<reference key="8">
    <citation type="journal article" date="2010" name="Cell">
        <title>A tissue-specific atlas of mouse protein phosphorylation and expression.</title>
        <authorList>
            <person name="Huttlin E.L."/>
            <person name="Jedrychowski M.P."/>
            <person name="Elias J.E."/>
            <person name="Goswami T."/>
            <person name="Rad R."/>
            <person name="Beausoleil S.A."/>
            <person name="Villen J."/>
            <person name="Haas W."/>
            <person name="Sowa M.E."/>
            <person name="Gygi S.P."/>
        </authorList>
    </citation>
    <scope>IDENTIFICATION BY MASS SPECTROMETRY [LARGE SCALE ANALYSIS]</scope>
    <source>
        <tissue>Brain</tissue>
        <tissue>Brown adipose tissue</tissue>
        <tissue>Heart</tissue>
        <tissue>Kidney</tissue>
        <tissue>Liver</tissue>
        <tissue>Lung</tissue>
        <tissue>Pancreas</tissue>
        <tissue>Spleen</tissue>
        <tissue>Testis</tissue>
    </source>
</reference>
<reference key="9">
    <citation type="journal article" date="2013" name="J. Cell Biol.">
        <title>Tubulin glycylases and glutamylases have distinct functions in stabilization and motility of ependymal cilia.</title>
        <authorList>
            <person name="Bosch Grau M."/>
            <person name="Gonzalez Curto G."/>
            <person name="Rocha C."/>
            <person name="Magiera M.M."/>
            <person name="Marques Sousa P."/>
            <person name="Giordano T."/>
            <person name="Spassky N."/>
            <person name="Janke C."/>
        </authorList>
    </citation>
    <scope>GLYCYLATION</scope>
    <scope>GLUTAMYLATION</scope>
</reference>
<reference key="10">
    <citation type="journal article" date="2013" name="Mol. Cell">
        <title>SIRT5-mediated lysine desuccinylation impacts diverse metabolic pathways.</title>
        <authorList>
            <person name="Park J."/>
            <person name="Chen Y."/>
            <person name="Tishkoff D.X."/>
            <person name="Peng C."/>
            <person name="Tan M."/>
            <person name="Dai L."/>
            <person name="Xie Z."/>
            <person name="Zhang Y."/>
            <person name="Zwaans B.M."/>
            <person name="Skinner M.E."/>
            <person name="Lombard D.B."/>
            <person name="Zhao Y."/>
        </authorList>
    </citation>
    <scope>ACETYLATION [LARGE SCALE ANALYSIS] AT LYS-58</scope>
    <scope>IDENTIFICATION BY MASS SPECTROMETRY [LARGE SCALE ANALYSIS]</scope>
    <source>
        <tissue>Embryonic fibroblast</tissue>
    </source>
</reference>
<reference key="11">
    <citation type="journal article" date="2017" name="Am. J. Hum. Genet.">
        <title>Mutations in TUBB4B cause a distinctive sensorineural disease.</title>
        <authorList>
            <person name="Luscan R."/>
            <person name="Mechaussier S."/>
            <person name="Paul A."/>
            <person name="Tian G."/>
            <person name="Gerard X."/>
            <person name="Defoort-Dellhemmes S."/>
            <person name="Loundon N."/>
            <person name="Audo I."/>
            <person name="Bonnin S."/>
            <person name="LeGargasson J.F."/>
            <person name="Dumont J."/>
            <person name="Goudin N."/>
            <person name="Garfa-Traore M."/>
            <person name="Bras M."/>
            <person name="Pouliet A."/>
            <person name="Bessieres B."/>
            <person name="Boddaert N."/>
            <person name="Sahel J.A."/>
            <person name="Lyonnet S."/>
            <person name="Kaplan J."/>
            <person name="Cowan N.J."/>
            <person name="Rozet J.M."/>
            <person name="Marlin S."/>
            <person name="Perrault I."/>
        </authorList>
    </citation>
    <scope>TISSUE SPECIFICITY</scope>
</reference>
<reference key="12">
    <citation type="journal article" date="2021" name="Science">
        <title>Tubulin glycylation controls axonemal dynein activity, flagellar beat, and male fertility.</title>
        <authorList>
            <person name="Gadadhar S."/>
            <person name="Alvarez Viar G."/>
            <person name="Hansen J.N."/>
            <person name="Gong A."/>
            <person name="Kostarev A."/>
            <person name="Ialy-Radio C."/>
            <person name="Leboucher S."/>
            <person name="Whitfield M."/>
            <person name="Ziyyat A."/>
            <person name="Toure A."/>
            <person name="Alvarez L."/>
            <person name="Pigino G."/>
            <person name="Janke C."/>
        </authorList>
    </citation>
    <scope>GLYCYLATION</scope>
</reference>
<reference evidence="19" key="13">
    <citation type="journal article" date="2023" name="Cell">
        <title>Structures of sperm flagellar doublet microtubules expand the genetic spectrum of male infertility.</title>
        <authorList>
            <person name="Zhou L."/>
            <person name="Liu H."/>
            <person name="Liu S."/>
            <person name="Yang X."/>
            <person name="Dong Y."/>
            <person name="Pan Y."/>
            <person name="Xiao Z."/>
            <person name="Zheng B."/>
            <person name="Sun Y."/>
            <person name="Huang P."/>
            <person name="Zhang X."/>
            <person name="Hu J."/>
            <person name="Sun R."/>
            <person name="Feng S."/>
            <person name="Zhu Y."/>
            <person name="Liu M."/>
            <person name="Gui M."/>
            <person name="Wu J."/>
        </authorList>
    </citation>
    <scope>STRUCTURE BY ELECTRON MICROSCOPY (3.50 ANGSTROMS) OF SPERM FLAGELLAR DOUBLET MICROTUBULES</scope>
    <scope>SUBCELLULAR LOCATION</scope>
    <scope>SUBUNIT</scope>
</reference>
<reference evidence="20" key="14">
    <citation type="journal article" date="2023" name="Cell">
        <title>De novo protein identification in mammalian sperm using in situ cryoelectron tomography and AlphaFold2 docking.</title>
        <authorList>
            <person name="Chen Z."/>
            <person name="Shiozaki M."/>
            <person name="Haas K.M."/>
            <person name="Skinner W.M."/>
            <person name="Zhao S."/>
            <person name="Guo C."/>
            <person name="Polacco B.J."/>
            <person name="Yu Z."/>
            <person name="Krogan N.J."/>
            <person name="Lishko P.V."/>
            <person name="Kaake R.M."/>
            <person name="Vale R.D."/>
            <person name="Agard D.A."/>
        </authorList>
    </citation>
    <scope>STRUCTURE BY ELECTRON MICROSCOPY (7.70 ANGSTROMS) OF SPERM FLAGELLAR DOUBLET MICROTUBULES</scope>
    <scope>SUBCELLULAR LOCATION</scope>
    <scope>SUBUNIT</scope>
</reference>
<reference evidence="17 18" key="15">
    <citation type="journal article" date="2023" name="Cell Discov.">
        <title>In-cell structural insight into the stability of sperm microtubule doublet.</title>
        <authorList>
            <person name="Tai L."/>
            <person name="Yin G."/>
            <person name="Huang X."/>
            <person name="Sun F."/>
            <person name="Zhu Y."/>
        </authorList>
    </citation>
    <scope>STRUCTURE BY ELECTRON MICROSCOPY (4.50 ANGSTROMS)</scope>
    <scope>FUNCTION</scope>
    <scope>SUBUNIT</scope>
    <scope>SUBCELLULAR LOCATION</scope>
</reference>
<protein>
    <recommendedName>
        <fullName>Tubulin beta-4B chain</fullName>
    </recommendedName>
    <alternativeName>
        <fullName>Tubulin beta-2C chain</fullName>
    </alternativeName>
</protein>
<organism>
    <name type="scientific">Mus musculus</name>
    <name type="common">Mouse</name>
    <dbReference type="NCBI Taxonomy" id="10090"/>
    <lineage>
        <taxon>Eukaryota</taxon>
        <taxon>Metazoa</taxon>
        <taxon>Chordata</taxon>
        <taxon>Craniata</taxon>
        <taxon>Vertebrata</taxon>
        <taxon>Euteleostomi</taxon>
        <taxon>Mammalia</taxon>
        <taxon>Eutheria</taxon>
        <taxon>Euarchontoglires</taxon>
        <taxon>Glires</taxon>
        <taxon>Rodentia</taxon>
        <taxon>Myomorpha</taxon>
        <taxon>Muroidea</taxon>
        <taxon>Muridae</taxon>
        <taxon>Murinae</taxon>
        <taxon>Mus</taxon>
        <taxon>Mus</taxon>
    </lineage>
</organism>
<gene>
    <name type="primary">Tubb4b</name>
    <name type="synonym">Tubb2c</name>
</gene>
<name>TBB4B_MOUSE</name>
<sequence>MREIVHLQAGQCGNQIGAKFWEVISDEHGIDPTGTYHGDSDLQLERINVYYNEATGGKYVPRAVLVDLEPGTMDSVRSGPFGQIFRPDNFVFGQSGAGNNWAKGHYTEGAELVDSVLDVVRKEAESCDCLQGFQLTHSLGGGTGSGMGTLLISKIREEYPDRIMNTFSVVPSPKVSDTVVEPYNATLSVHQLVENTDETYCIDNEALYDICFRTLKLTTPTYGDLNHLVSATMSGVTTCLRFPGQLNADLRKLAVNMVPFPRLHFFMPGFAPLTSRGSQQYRALTVPELTQQMFDAKNMMAACDPRHGRYLTVAAVFRGRMSMKEVDEQMLNVQNKNSSYFVEWIPNNVKTAVCDIPPRGLKMSATFIGNSTAIQELFKRISEQFTAMFRRKAFLHWYTGEGMDEMEFTEAESNMNDLVSEYQQYQDATAEEEGEFEEEAEEEVA</sequence>
<keyword id="KW-0002">3D-structure</keyword>
<keyword id="KW-0007">Acetylation</keyword>
<keyword id="KW-0966">Cell projection</keyword>
<keyword id="KW-0969">Cilium</keyword>
<keyword id="KW-0963">Cytoplasm</keyword>
<keyword id="KW-0206">Cytoskeleton</keyword>
<keyword id="KW-0903">Direct protein sequencing</keyword>
<keyword id="KW-0282">Flagellum</keyword>
<keyword id="KW-0342">GTP-binding</keyword>
<keyword id="KW-1017">Isopeptide bond</keyword>
<keyword id="KW-0460">Magnesium</keyword>
<keyword id="KW-0479">Metal-binding</keyword>
<keyword id="KW-0493">Microtubule</keyword>
<keyword id="KW-0547">Nucleotide-binding</keyword>
<keyword id="KW-0597">Phosphoprotein</keyword>
<keyword id="KW-1185">Reference proteome</keyword>
<evidence type="ECO:0000250" key="1">
    <source>
        <dbReference type="UniProtKB" id="P07437"/>
    </source>
</evidence>
<evidence type="ECO:0000250" key="2">
    <source>
        <dbReference type="UniProtKB" id="P68363"/>
    </source>
</evidence>
<evidence type="ECO:0000250" key="3">
    <source>
        <dbReference type="UniProtKB" id="P68371"/>
    </source>
</evidence>
<evidence type="ECO:0000250" key="4">
    <source>
        <dbReference type="UniProtKB" id="Q13509"/>
    </source>
</evidence>
<evidence type="ECO:0000250" key="5">
    <source>
        <dbReference type="UniProtKB" id="Q2T9S0"/>
    </source>
</evidence>
<evidence type="ECO:0000250" key="6">
    <source>
        <dbReference type="UniProtKB" id="Q71U36"/>
    </source>
</evidence>
<evidence type="ECO:0000256" key="7">
    <source>
        <dbReference type="SAM" id="MobiDB-lite"/>
    </source>
</evidence>
<evidence type="ECO:0000269" key="8">
    <source>
    </source>
</evidence>
<evidence type="ECO:0000269" key="9">
    <source>
    </source>
</evidence>
<evidence type="ECO:0000269" key="10">
    <source>
    </source>
</evidence>
<evidence type="ECO:0000269" key="11">
    <source>
    </source>
</evidence>
<evidence type="ECO:0000269" key="12">
    <source>
    </source>
</evidence>
<evidence type="ECO:0000269" key="13">
    <source>
    </source>
</evidence>
<evidence type="ECO:0000269" key="14">
    <source>
    </source>
</evidence>
<evidence type="ECO:0000269" key="15">
    <source>
    </source>
</evidence>
<evidence type="ECO:0000305" key="16"/>
<evidence type="ECO:0007744" key="17">
    <source>
        <dbReference type="PDB" id="8I7O"/>
    </source>
</evidence>
<evidence type="ECO:0007744" key="18">
    <source>
        <dbReference type="PDB" id="8I7R"/>
    </source>
</evidence>
<evidence type="ECO:0007744" key="19">
    <source>
        <dbReference type="PDB" id="8IYJ"/>
    </source>
</evidence>
<evidence type="ECO:0007744" key="20">
    <source>
        <dbReference type="PDB" id="8TO0"/>
    </source>
</evidence>
<evidence type="ECO:0007744" key="21">
    <source>
    </source>
</evidence>
<accession>P68372</accession>
<accession>P05217</accession>
<accession>Q3TKF0</accession>
<accession>Q3UJ73</accession>
<accession>Q99JZ6</accession>
<dbReference type="EMBL" id="AK146587">
    <property type="protein sequence ID" value="BAE27282.1"/>
    <property type="molecule type" value="mRNA"/>
</dbReference>
<dbReference type="EMBL" id="AK167022">
    <property type="protein sequence ID" value="BAE39195.1"/>
    <property type="molecule type" value="mRNA"/>
</dbReference>
<dbReference type="EMBL" id="AL732309">
    <property type="status" value="NOT_ANNOTATED_CDS"/>
    <property type="molecule type" value="Genomic_DNA"/>
</dbReference>
<dbReference type="EMBL" id="BC005547">
    <property type="protein sequence ID" value="AAH05547.1"/>
    <property type="molecule type" value="mRNA"/>
</dbReference>
<dbReference type="EMBL" id="BC022919">
    <property type="protein sequence ID" value="AAH22919.1"/>
    <property type="molecule type" value="mRNA"/>
</dbReference>
<dbReference type="EMBL" id="BC083319">
    <property type="protein sequence ID" value="AAH83319.1"/>
    <property type="molecule type" value="mRNA"/>
</dbReference>
<dbReference type="CCDS" id="CCDS15753.1"/>
<dbReference type="PIR" id="C25437">
    <property type="entry name" value="C25437"/>
</dbReference>
<dbReference type="RefSeq" id="NP_666228.1">
    <property type="nucleotide sequence ID" value="NM_146116.2"/>
</dbReference>
<dbReference type="PDB" id="8I7O">
    <property type="method" value="EM"/>
    <property type="resolution" value="4.50 A"/>
    <property type="chains" value="AF/AH/BF/BH/CF/CH/CJ/DD/DF/DH/ED/EF/EH/FD/FF/FH/GD/GF/GH/HD/HF/HH/IF/IH/JD/JF/JH/KD/KF/KH=1-427"/>
</dbReference>
<dbReference type="PDB" id="8I7R">
    <property type="method" value="EM"/>
    <property type="resolution" value="6.50 A"/>
    <property type="chains" value="AB/AD/AF/AH/AJ/AL/BB/BD/BF/BH/BJ/BL/CB/CD/CF/CH/CJ/CL/DB/DD/DF/DH/DJ/DL/EB/ED/EF/EH/EJ/EL=1-427"/>
</dbReference>
<dbReference type="PDB" id="8IYJ">
    <property type="method" value="EM"/>
    <property type="resolution" value="3.50 A"/>
    <property type="chains" value="AB/AD/AF/AH/AJ/AL/AN/AP/BB/BD/BF/BH/BJ/BL/BN/BP/CB/CD/CF/CH/CJ/CL/CN/CP/DB/DD/DF/DH/DJ/DL=1-445"/>
</dbReference>
<dbReference type="PDB" id="8TO0">
    <property type="method" value="EM"/>
    <property type="resolution" value="7.70 A"/>
    <property type="chains" value="A0/A4/A6/A8/AN/AP/AR/AT/AV/AX/Ak/Am/Ao/Aq/As/Au/Aw/B1/B3/B7/B9/BB/BD/BF/BN/BP/BR/BT/BV/BX=1-445"/>
</dbReference>
<dbReference type="PDBsum" id="8I7O"/>
<dbReference type="PDBsum" id="8I7R"/>
<dbReference type="PDBsum" id="8IYJ"/>
<dbReference type="PDBsum" id="8TO0"/>
<dbReference type="EMDB" id="EMD-35229"/>
<dbReference type="EMDB" id="EMD-35230"/>
<dbReference type="EMDB" id="EMD-35823"/>
<dbReference type="EMDB" id="EMD-41431"/>
<dbReference type="SMR" id="P68372"/>
<dbReference type="BioGRID" id="230642">
    <property type="interactions" value="63"/>
</dbReference>
<dbReference type="FunCoup" id="P68372">
    <property type="interactions" value="1484"/>
</dbReference>
<dbReference type="IntAct" id="P68372">
    <property type="interactions" value="38"/>
</dbReference>
<dbReference type="MINT" id="P68372"/>
<dbReference type="STRING" id="10090.ENSMUSP00000042342"/>
<dbReference type="GlyGen" id="P68372">
    <property type="glycosylation" value="2 sites, 1 O-linked glycan (2 sites)"/>
</dbReference>
<dbReference type="iPTMnet" id="P68372"/>
<dbReference type="MetOSite" id="P68372"/>
<dbReference type="PhosphoSitePlus" id="P68372"/>
<dbReference type="SwissPalm" id="P68372"/>
<dbReference type="REPRODUCTION-2DPAGE" id="IPI00169463"/>
<dbReference type="REPRODUCTION-2DPAGE" id="P68372"/>
<dbReference type="jPOST" id="P68372"/>
<dbReference type="PaxDb" id="10090-ENSMUSP00000042342"/>
<dbReference type="PeptideAtlas" id="P68372"/>
<dbReference type="ProteomicsDB" id="254860"/>
<dbReference type="Pumba" id="P68372"/>
<dbReference type="Antibodypedia" id="4391">
    <property type="antibodies" value="148 antibodies from 25 providers"/>
</dbReference>
<dbReference type="DNASU" id="227613"/>
<dbReference type="Ensembl" id="ENSMUST00000043584.5">
    <property type="protein sequence ID" value="ENSMUSP00000042342.5"/>
    <property type="gene ID" value="ENSMUSG00000036752.5"/>
</dbReference>
<dbReference type="GeneID" id="227613"/>
<dbReference type="KEGG" id="mmu:227613"/>
<dbReference type="UCSC" id="uc008iqs.2">
    <property type="organism name" value="mouse"/>
</dbReference>
<dbReference type="AGR" id="MGI:1915472"/>
<dbReference type="CTD" id="10383"/>
<dbReference type="MGI" id="MGI:1915472">
    <property type="gene designation" value="Tubb4b"/>
</dbReference>
<dbReference type="VEuPathDB" id="HostDB:ENSMUSG00000036752"/>
<dbReference type="eggNOG" id="KOG1375">
    <property type="taxonomic scope" value="Eukaryota"/>
</dbReference>
<dbReference type="GeneTree" id="ENSGT00940000154394"/>
<dbReference type="HOGENOM" id="CLU_015718_1_1_1"/>
<dbReference type="InParanoid" id="P68372"/>
<dbReference type="OMA" id="WVPRSVN"/>
<dbReference type="OrthoDB" id="9987387at2759"/>
<dbReference type="PhylomeDB" id="P68372"/>
<dbReference type="TreeFam" id="TF300298"/>
<dbReference type="Reactome" id="R-MMU-190840">
    <property type="pathway name" value="Microtubule-dependent trafficking of connexons from Golgi to the plasma membrane"/>
</dbReference>
<dbReference type="Reactome" id="R-MMU-2132295">
    <property type="pathway name" value="MHC class II antigen presentation"/>
</dbReference>
<dbReference type="Reactome" id="R-MMU-2467813">
    <property type="pathway name" value="Separation of Sister Chromatids"/>
</dbReference>
<dbReference type="Reactome" id="R-MMU-2500257">
    <property type="pathway name" value="Resolution of Sister Chromatid Cohesion"/>
</dbReference>
<dbReference type="Reactome" id="R-MMU-2565942">
    <property type="pathway name" value="Regulation of PLK1 Activity at G2/M Transition"/>
</dbReference>
<dbReference type="Reactome" id="R-MMU-3371497">
    <property type="pathway name" value="HSP90 chaperone cycle for steroid hormone receptors (SHR) in the presence of ligand"/>
</dbReference>
<dbReference type="Reactome" id="R-MMU-380259">
    <property type="pathway name" value="Loss of Nlp from mitotic centrosomes"/>
</dbReference>
<dbReference type="Reactome" id="R-MMU-380270">
    <property type="pathway name" value="Recruitment of mitotic centrosome proteins and complexes"/>
</dbReference>
<dbReference type="Reactome" id="R-MMU-380284">
    <property type="pathway name" value="Loss of proteins required for interphase microtubule organization from the centrosome"/>
</dbReference>
<dbReference type="Reactome" id="R-MMU-380320">
    <property type="pathway name" value="Recruitment of NuMA to mitotic centrosomes"/>
</dbReference>
<dbReference type="Reactome" id="R-MMU-437239">
    <property type="pathway name" value="Recycling pathway of L1"/>
</dbReference>
<dbReference type="Reactome" id="R-MMU-5610787">
    <property type="pathway name" value="Hedgehog 'off' state"/>
</dbReference>
<dbReference type="Reactome" id="R-MMU-5617833">
    <property type="pathway name" value="Cilium Assembly"/>
</dbReference>
<dbReference type="Reactome" id="R-MMU-5620912">
    <property type="pathway name" value="Anchoring of the basal body to the plasma membrane"/>
</dbReference>
<dbReference type="Reactome" id="R-MMU-5620924">
    <property type="pathway name" value="Intraflagellar transport"/>
</dbReference>
<dbReference type="Reactome" id="R-MMU-5626467">
    <property type="pathway name" value="RHO GTPases activate IQGAPs"/>
</dbReference>
<dbReference type="Reactome" id="R-MMU-5663220">
    <property type="pathway name" value="RHO GTPases Activate Formins"/>
</dbReference>
<dbReference type="Reactome" id="R-MMU-6798695">
    <property type="pathway name" value="Neutrophil degranulation"/>
</dbReference>
<dbReference type="Reactome" id="R-MMU-6807878">
    <property type="pathway name" value="COPI-mediated anterograde transport"/>
</dbReference>
<dbReference type="Reactome" id="R-MMU-6811434">
    <property type="pathway name" value="COPI-dependent Golgi-to-ER retrograde traffic"/>
</dbReference>
<dbReference type="Reactome" id="R-MMU-6811436">
    <property type="pathway name" value="COPI-independent Golgi-to-ER retrograde traffic"/>
</dbReference>
<dbReference type="Reactome" id="R-MMU-68877">
    <property type="pathway name" value="Mitotic Prometaphase"/>
</dbReference>
<dbReference type="Reactome" id="R-MMU-8852276">
    <property type="pathway name" value="The role of GTSE1 in G2/M progression after G2 checkpoint"/>
</dbReference>
<dbReference type="Reactome" id="R-MMU-8854518">
    <property type="pathway name" value="AURKA Activation by TPX2"/>
</dbReference>
<dbReference type="Reactome" id="R-MMU-8955332">
    <property type="pathway name" value="Carboxyterminal post-translational modifications of tubulin"/>
</dbReference>
<dbReference type="Reactome" id="R-MMU-9646399">
    <property type="pathway name" value="Aggrephagy"/>
</dbReference>
<dbReference type="Reactome" id="R-MMU-9648025">
    <property type="pathway name" value="EML4 and NUDC in mitotic spindle formation"/>
</dbReference>
<dbReference type="Reactome" id="R-MMU-9668328">
    <property type="pathway name" value="Sealing of the nuclear envelope (NE) by ESCRT-III"/>
</dbReference>
<dbReference type="Reactome" id="R-MMU-983189">
    <property type="pathway name" value="Kinesins"/>
</dbReference>
<dbReference type="Reactome" id="R-MMU-9833482">
    <property type="pathway name" value="PKR-mediated signaling"/>
</dbReference>
<dbReference type="BioGRID-ORCS" id="227613">
    <property type="hits" value="8 hits in 78 CRISPR screens"/>
</dbReference>
<dbReference type="CD-CODE" id="5E82D60E">
    <property type="entry name" value="Nucleolus"/>
</dbReference>
<dbReference type="CD-CODE" id="CE726F99">
    <property type="entry name" value="Postsynaptic density"/>
</dbReference>
<dbReference type="ChiTaRS" id="Tubb4b">
    <property type="organism name" value="mouse"/>
</dbReference>
<dbReference type="PRO" id="PR:P68372"/>
<dbReference type="Proteomes" id="UP000000589">
    <property type="component" value="Chromosome 2"/>
</dbReference>
<dbReference type="RNAct" id="P68372">
    <property type="molecule type" value="protein"/>
</dbReference>
<dbReference type="Bgee" id="ENSMUSG00000036752">
    <property type="expression patterns" value="Expressed in spermatid and 66 other cell types or tissues"/>
</dbReference>
<dbReference type="GO" id="GO:0005879">
    <property type="term" value="C:axonemal microtubule"/>
    <property type="evidence" value="ECO:0007669"/>
    <property type="project" value="Ensembl"/>
</dbReference>
<dbReference type="GO" id="GO:0045171">
    <property type="term" value="C:intercellular bridge"/>
    <property type="evidence" value="ECO:0007669"/>
    <property type="project" value="Ensembl"/>
</dbReference>
<dbReference type="GO" id="GO:0072686">
    <property type="term" value="C:mitotic spindle"/>
    <property type="evidence" value="ECO:0007669"/>
    <property type="project" value="Ensembl"/>
</dbReference>
<dbReference type="GO" id="GO:0043209">
    <property type="term" value="C:myelin sheath"/>
    <property type="evidence" value="ECO:0007005"/>
    <property type="project" value="UniProtKB"/>
</dbReference>
<dbReference type="GO" id="GO:0036126">
    <property type="term" value="C:sperm flagellum"/>
    <property type="evidence" value="ECO:0000314"/>
    <property type="project" value="UniProtKB"/>
</dbReference>
<dbReference type="GO" id="GO:0045298">
    <property type="term" value="C:tubulin complex"/>
    <property type="evidence" value="ECO:0000303"/>
    <property type="project" value="UniProtKB"/>
</dbReference>
<dbReference type="GO" id="GO:0003725">
    <property type="term" value="F:double-stranded RNA binding"/>
    <property type="evidence" value="ECO:0000266"/>
    <property type="project" value="MGI"/>
</dbReference>
<dbReference type="GO" id="GO:0005525">
    <property type="term" value="F:GTP binding"/>
    <property type="evidence" value="ECO:0000303"/>
    <property type="project" value="UniProtKB"/>
</dbReference>
<dbReference type="GO" id="GO:0003924">
    <property type="term" value="F:GTPase activity"/>
    <property type="evidence" value="ECO:0007669"/>
    <property type="project" value="InterPro"/>
</dbReference>
<dbReference type="GO" id="GO:0046872">
    <property type="term" value="F:metal ion binding"/>
    <property type="evidence" value="ECO:0007669"/>
    <property type="project" value="UniProtKB-KW"/>
</dbReference>
<dbReference type="GO" id="GO:0005200">
    <property type="term" value="F:structural constituent of cytoskeleton"/>
    <property type="evidence" value="ECO:0007669"/>
    <property type="project" value="InterPro"/>
</dbReference>
<dbReference type="GO" id="GO:0030317">
    <property type="term" value="P:flagellated sperm motility"/>
    <property type="evidence" value="ECO:0000314"/>
    <property type="project" value="UniProtKB"/>
</dbReference>
<dbReference type="GO" id="GO:0007017">
    <property type="term" value="P:microtubule-based process"/>
    <property type="evidence" value="ECO:0000303"/>
    <property type="project" value="UniProtKB"/>
</dbReference>
<dbReference type="CDD" id="cd02187">
    <property type="entry name" value="beta_tubulin"/>
    <property type="match status" value="1"/>
</dbReference>
<dbReference type="FunFam" id="1.10.287.600:FF:000006">
    <property type="entry name" value="Tubulin beta chain"/>
    <property type="match status" value="1"/>
</dbReference>
<dbReference type="FunFam" id="3.30.1330.20:FF:000002">
    <property type="entry name" value="Tubulin beta chain"/>
    <property type="match status" value="1"/>
</dbReference>
<dbReference type="FunFam" id="3.40.50.1440:FF:000003">
    <property type="entry name" value="Tubulin beta chain"/>
    <property type="match status" value="1"/>
</dbReference>
<dbReference type="Gene3D" id="1.10.287.600">
    <property type="entry name" value="Helix hairpin bin"/>
    <property type="match status" value="1"/>
</dbReference>
<dbReference type="Gene3D" id="3.30.1330.20">
    <property type="entry name" value="Tubulin/FtsZ, C-terminal domain"/>
    <property type="match status" value="1"/>
</dbReference>
<dbReference type="Gene3D" id="3.40.50.1440">
    <property type="entry name" value="Tubulin/FtsZ, GTPase domain"/>
    <property type="match status" value="1"/>
</dbReference>
<dbReference type="InterPro" id="IPR013838">
    <property type="entry name" value="Beta-tubulin_BS"/>
</dbReference>
<dbReference type="InterPro" id="IPR002453">
    <property type="entry name" value="Beta_tubulin"/>
</dbReference>
<dbReference type="InterPro" id="IPR008280">
    <property type="entry name" value="Tub_FtsZ_C"/>
</dbReference>
<dbReference type="InterPro" id="IPR000217">
    <property type="entry name" value="Tubulin"/>
</dbReference>
<dbReference type="InterPro" id="IPR037103">
    <property type="entry name" value="Tubulin/FtsZ-like_C"/>
</dbReference>
<dbReference type="InterPro" id="IPR018316">
    <property type="entry name" value="Tubulin/FtsZ_2-layer-sand-dom"/>
</dbReference>
<dbReference type="InterPro" id="IPR036525">
    <property type="entry name" value="Tubulin/FtsZ_GTPase_sf"/>
</dbReference>
<dbReference type="InterPro" id="IPR023123">
    <property type="entry name" value="Tubulin_C"/>
</dbReference>
<dbReference type="InterPro" id="IPR017975">
    <property type="entry name" value="Tubulin_CS"/>
</dbReference>
<dbReference type="InterPro" id="IPR003008">
    <property type="entry name" value="Tubulin_FtsZ_GTPase"/>
</dbReference>
<dbReference type="PANTHER" id="PTHR11588">
    <property type="entry name" value="TUBULIN"/>
    <property type="match status" value="1"/>
</dbReference>
<dbReference type="Pfam" id="PF00091">
    <property type="entry name" value="Tubulin"/>
    <property type="match status" value="1"/>
</dbReference>
<dbReference type="Pfam" id="PF03953">
    <property type="entry name" value="Tubulin_C"/>
    <property type="match status" value="1"/>
</dbReference>
<dbReference type="PRINTS" id="PR01163">
    <property type="entry name" value="BETATUBULIN"/>
</dbReference>
<dbReference type="PRINTS" id="PR01161">
    <property type="entry name" value="TUBULIN"/>
</dbReference>
<dbReference type="SMART" id="SM00864">
    <property type="entry name" value="Tubulin"/>
    <property type="match status" value="1"/>
</dbReference>
<dbReference type="SMART" id="SM00865">
    <property type="entry name" value="Tubulin_C"/>
    <property type="match status" value="1"/>
</dbReference>
<dbReference type="SUPFAM" id="SSF55307">
    <property type="entry name" value="Tubulin C-terminal domain-like"/>
    <property type="match status" value="1"/>
</dbReference>
<dbReference type="SUPFAM" id="SSF52490">
    <property type="entry name" value="Tubulin nucleotide-binding domain-like"/>
    <property type="match status" value="1"/>
</dbReference>
<dbReference type="PROSITE" id="PS00227">
    <property type="entry name" value="TUBULIN"/>
    <property type="match status" value="1"/>
</dbReference>
<dbReference type="PROSITE" id="PS00228">
    <property type="entry name" value="TUBULIN_B_AUTOREG"/>
    <property type="match status" value="1"/>
</dbReference>
<proteinExistence type="evidence at protein level"/>
<comment type="function">
    <text>Tubulin is the major constituent of microtubules, a cylinder consisting of laterally associated linear protofilaments composed of alpha- and beta-tubulin heterodimers. Microtubules grow by the addition of GTP-tubulin dimers to the microtubule end, where a stabilizing cap forms. Below the cap, tubulin dimers are in GDP-bound state, owing to GTPase activity of alpha-tubulin.</text>
</comment>
<comment type="cofactor">
    <cofactor evidence="2">
        <name>Mg(2+)</name>
        <dbReference type="ChEBI" id="CHEBI:18420"/>
    </cofactor>
</comment>
<comment type="subunit">
    <text evidence="13 14 15">Dimer of alpha and beta chains. A typical microtubule is a hollow water-filled tube with an outer diameter of 25 nm and an inner diameter of 15 nM. Alpha-beta heterodimers associate head-to-tail to form protofilaments running lengthwise along the microtubule wall with the beta-tubulin subunit facing the microtubule plus end conferring a structural polarity. Microtubules usually have 13 protofilaments but different protofilament numbers can be found in some organisms and specialized cells. Component of sperm flagellar doublet microtubules (PubMed:37295417, PubMed:37865089, PubMed:37989994).</text>
</comment>
<comment type="subcellular location">
    <subcellularLocation>
        <location>Cytoplasm</location>
        <location>Cytoskeleton</location>
    </subcellularLocation>
    <subcellularLocation>
        <location evidence="13 14 15">Cytoplasm</location>
        <location evidence="13 14 15">Cytoskeleton</location>
        <location evidence="13 14 15">Flagellum axoneme</location>
    </subcellularLocation>
</comment>
<comment type="tissue specificity">
    <text evidence="11">Widely expressed. Expressed in the retina and the cochlea.</text>
</comment>
<comment type="domain">
    <text>The highly acidic C-terminal region may bind cations such as calcium.</text>
</comment>
<comment type="domain">
    <text evidence="1">The MREI motif is common among all beta-tubulin isoforms and may be critical for tubulin autoregulation.</text>
</comment>
<comment type="PTM">
    <text evidence="9 10 12">Some glutamate residues at the C-terminus are polyglycylated, resulting in polyglycine chains on the gamma-carboxyl group. Glycylation is mainly limited to tubulin incorporated into axonemes (cilia and flagella) whereas glutamylation is prevalent in neuronal cells, centrioles, axonemes, and the mitotic spindle. Both modifications can coexist on the same protein on adjacent residues, and lowering polyglycylation levels increases polyglutamylation, and reciprocally. Cilia and flagella glycylation is required for their stability and maintenance. Flagella glycylation controls sperm motility (PubMed:33414192).</text>
</comment>
<comment type="PTM">
    <text evidence="6 8 10">Some glutamate residues at the C-terminus are polyglutamylated, resulting in polyglutamate chains on the gamma-carboxyl group (PubMed:15890843). Polyglutamylation plays a key role in microtubule severing by spastin (SPAST). SPAST preferentially recognizes and acts on microtubules decorated with short polyglutamate tails: severing activity by SPAST increases as the number of glutamates per tubulin rises from one to eight, but decreases beyond this glutamylation threshold (By similarity). Glutamylation is also involved in cilia motility (PubMed:23897886).</text>
</comment>
<comment type="PTM">
    <text evidence="3">Phosphorylated on Ser-172 by CDK1 during the cell cycle, from metaphase to telophase, but not in interphase. This phosphorylation inhibits tubulin incorporation into microtubules.</text>
</comment>
<comment type="similarity">
    <text evidence="16">Belongs to the tubulin family.</text>
</comment>
<feature type="chain" id="PRO_0000048249" description="Tubulin beta-4B chain">
    <location>
        <begin position="1"/>
        <end position="445"/>
    </location>
</feature>
<feature type="region of interest" description="Disordered" evidence="7">
    <location>
        <begin position="426"/>
        <end position="445"/>
    </location>
</feature>
<feature type="short sequence motif" description="MREI motif" evidence="1">
    <location>
        <begin position="1"/>
        <end position="4"/>
    </location>
</feature>
<feature type="compositionally biased region" description="Acidic residues" evidence="7">
    <location>
        <begin position="429"/>
        <end position="445"/>
    </location>
</feature>
<feature type="binding site" evidence="4">
    <location>
        <position position="11"/>
    </location>
    <ligand>
        <name>GTP</name>
        <dbReference type="ChEBI" id="CHEBI:37565"/>
    </ligand>
</feature>
<feature type="binding site" evidence="2">
    <location>
        <position position="69"/>
    </location>
    <ligand>
        <name>GTP</name>
        <dbReference type="ChEBI" id="CHEBI:37565"/>
    </ligand>
</feature>
<feature type="binding site" evidence="2">
    <location>
        <position position="69"/>
    </location>
    <ligand>
        <name>Mg(2+)</name>
        <dbReference type="ChEBI" id="CHEBI:18420"/>
    </ligand>
</feature>
<feature type="binding site" evidence="4">
    <location>
        <position position="138"/>
    </location>
    <ligand>
        <name>GTP</name>
        <dbReference type="ChEBI" id="CHEBI:37565"/>
    </ligand>
</feature>
<feature type="binding site" evidence="4">
    <location>
        <position position="142"/>
    </location>
    <ligand>
        <name>GTP</name>
        <dbReference type="ChEBI" id="CHEBI:37565"/>
    </ligand>
</feature>
<feature type="binding site" evidence="4">
    <location>
        <position position="143"/>
    </location>
    <ligand>
        <name>GTP</name>
        <dbReference type="ChEBI" id="CHEBI:37565"/>
    </ligand>
</feature>
<feature type="binding site" evidence="4">
    <location>
        <position position="144"/>
    </location>
    <ligand>
        <name>GTP</name>
        <dbReference type="ChEBI" id="CHEBI:37565"/>
    </ligand>
</feature>
<feature type="binding site" evidence="4">
    <location>
        <position position="204"/>
    </location>
    <ligand>
        <name>GTP</name>
        <dbReference type="ChEBI" id="CHEBI:37565"/>
    </ligand>
</feature>
<feature type="binding site" evidence="4">
    <location>
        <position position="226"/>
    </location>
    <ligand>
        <name>GTP</name>
        <dbReference type="ChEBI" id="CHEBI:37565"/>
    </ligand>
</feature>
<feature type="modified residue" description="Phosphothreonine" evidence="3">
    <location>
        <position position="55"/>
    </location>
</feature>
<feature type="modified residue" description="N6-acetyllysine" evidence="21">
    <location>
        <position position="58"/>
    </location>
</feature>
<feature type="modified residue" description="Phosphoserine; by CDK1" evidence="3">
    <location>
        <position position="172"/>
    </location>
</feature>
<feature type="modified residue" description="5-glutamyl polyglutamate" evidence="5">
    <location>
        <position position="438"/>
    </location>
</feature>
<feature type="sequence conflict" description="In Ref. 4; AAH05547." evidence="16" ref="4">
    <original>L</original>
    <variation>P</variation>
    <location>
        <position position="207"/>
    </location>
</feature>
<feature type="sequence conflict" description="In Ref. 2; BAE27282." evidence="16" ref="2">
    <original>V</original>
    <variation>A</variation>
    <location>
        <position position="342"/>
    </location>
</feature>